<name>GUAC_STAAW</name>
<proteinExistence type="inferred from homology"/>
<keyword id="KW-0521">NADP</keyword>
<keyword id="KW-0560">Oxidoreductase</keyword>
<protein>
    <recommendedName>
        <fullName evidence="1">GMP reductase</fullName>
        <ecNumber evidence="1">1.7.1.7</ecNumber>
    </recommendedName>
    <alternativeName>
        <fullName evidence="1">Guanosine 5'-monophosphate oxidoreductase</fullName>
        <shortName evidence="1">Guanosine monophosphate reductase</shortName>
    </alternativeName>
</protein>
<organism>
    <name type="scientific">Staphylococcus aureus (strain MW2)</name>
    <dbReference type="NCBI Taxonomy" id="196620"/>
    <lineage>
        <taxon>Bacteria</taxon>
        <taxon>Bacillati</taxon>
        <taxon>Bacillota</taxon>
        <taxon>Bacilli</taxon>
        <taxon>Bacillales</taxon>
        <taxon>Staphylococcaceae</taxon>
        <taxon>Staphylococcus</taxon>
    </lineage>
</organism>
<comment type="function">
    <text evidence="1">Catalyzes the irreversible NADPH-dependent deamination of GMP to IMP. It functions in the conversion of nucleobase, nucleoside and nucleotide derivatives of G to A nucleotides, and in maintaining the intracellular balance of A and G nucleotides.</text>
</comment>
<comment type="catalytic activity">
    <reaction evidence="1">
        <text>IMP + NH4(+) + NADP(+) = GMP + NADPH + 2 H(+)</text>
        <dbReference type="Rhea" id="RHEA:17185"/>
        <dbReference type="ChEBI" id="CHEBI:15378"/>
        <dbReference type="ChEBI" id="CHEBI:28938"/>
        <dbReference type="ChEBI" id="CHEBI:57783"/>
        <dbReference type="ChEBI" id="CHEBI:58053"/>
        <dbReference type="ChEBI" id="CHEBI:58115"/>
        <dbReference type="ChEBI" id="CHEBI:58349"/>
        <dbReference type="EC" id="1.7.1.7"/>
    </reaction>
</comment>
<comment type="similarity">
    <text evidence="1">Belongs to the IMPDH/GMPR family. GuaC type 2 subfamily.</text>
</comment>
<reference key="1">
    <citation type="journal article" date="2002" name="Lancet">
        <title>Genome and virulence determinants of high virulence community-acquired MRSA.</title>
        <authorList>
            <person name="Baba T."/>
            <person name="Takeuchi F."/>
            <person name="Kuroda M."/>
            <person name="Yuzawa H."/>
            <person name="Aoki K."/>
            <person name="Oguchi A."/>
            <person name="Nagai Y."/>
            <person name="Iwama N."/>
            <person name="Asano K."/>
            <person name="Naimi T."/>
            <person name="Kuroda H."/>
            <person name="Cui L."/>
            <person name="Yamamoto K."/>
            <person name="Hiramatsu K."/>
        </authorList>
    </citation>
    <scope>NUCLEOTIDE SEQUENCE [LARGE SCALE GENOMIC DNA]</scope>
    <source>
        <strain>MW2</strain>
    </source>
</reference>
<gene>
    <name evidence="1" type="primary">guaC</name>
    <name type="ordered locus">MW1224</name>
</gene>
<feature type="chain" id="PRO_0000093767" description="GMP reductase">
    <location>
        <begin position="1"/>
        <end position="325"/>
    </location>
</feature>
<feature type="active site" description="Thioimidate intermediate" evidence="1">
    <location>
        <position position="174"/>
    </location>
</feature>
<feature type="binding site" evidence="1">
    <location>
        <begin position="203"/>
        <end position="226"/>
    </location>
    <ligand>
        <name>NADP(+)</name>
        <dbReference type="ChEBI" id="CHEBI:58349"/>
    </ligand>
</feature>
<accession>P60564</accession>
<accession>Q99UD9</accession>
<evidence type="ECO:0000255" key="1">
    <source>
        <dbReference type="HAMAP-Rule" id="MF_01511"/>
    </source>
</evidence>
<dbReference type="EC" id="1.7.1.7" evidence="1"/>
<dbReference type="EMBL" id="BA000033">
    <property type="protein sequence ID" value="BAB95089.1"/>
    <property type="molecule type" value="Genomic_DNA"/>
</dbReference>
<dbReference type="RefSeq" id="WP_000688122.1">
    <property type="nucleotide sequence ID" value="NC_003923.1"/>
</dbReference>
<dbReference type="SMR" id="P60564"/>
<dbReference type="KEGG" id="sam:MW1224"/>
<dbReference type="HOGENOM" id="CLU_022552_5_0_9"/>
<dbReference type="GO" id="GO:0005829">
    <property type="term" value="C:cytosol"/>
    <property type="evidence" value="ECO:0007669"/>
    <property type="project" value="TreeGrafter"/>
</dbReference>
<dbReference type="GO" id="GO:1902560">
    <property type="term" value="C:GMP reductase complex"/>
    <property type="evidence" value="ECO:0007669"/>
    <property type="project" value="InterPro"/>
</dbReference>
<dbReference type="GO" id="GO:0003920">
    <property type="term" value="F:GMP reductase activity"/>
    <property type="evidence" value="ECO:0007669"/>
    <property type="project" value="UniProtKB-UniRule"/>
</dbReference>
<dbReference type="GO" id="GO:0006163">
    <property type="term" value="P:purine nucleotide metabolic process"/>
    <property type="evidence" value="ECO:0007669"/>
    <property type="project" value="UniProtKB-UniRule"/>
</dbReference>
<dbReference type="CDD" id="cd00381">
    <property type="entry name" value="IMPDH"/>
    <property type="match status" value="1"/>
</dbReference>
<dbReference type="FunFam" id="3.20.20.70:FF:000079">
    <property type="entry name" value="GMP reductase"/>
    <property type="match status" value="1"/>
</dbReference>
<dbReference type="Gene3D" id="3.20.20.70">
    <property type="entry name" value="Aldolase class I"/>
    <property type="match status" value="1"/>
</dbReference>
<dbReference type="HAMAP" id="MF_01511">
    <property type="entry name" value="GMP_reduct_type2"/>
    <property type="match status" value="1"/>
</dbReference>
<dbReference type="InterPro" id="IPR013785">
    <property type="entry name" value="Aldolase_TIM"/>
</dbReference>
<dbReference type="InterPro" id="IPR050139">
    <property type="entry name" value="GMP_reductase"/>
</dbReference>
<dbReference type="InterPro" id="IPR005994">
    <property type="entry name" value="GuaC_type_2"/>
</dbReference>
<dbReference type="InterPro" id="IPR015875">
    <property type="entry name" value="IMP_DH/GMP_Rdtase_CS"/>
</dbReference>
<dbReference type="InterPro" id="IPR001093">
    <property type="entry name" value="IMP_DH_GMPRt"/>
</dbReference>
<dbReference type="NCBIfam" id="TIGR01306">
    <property type="entry name" value="GMP_reduct_2"/>
    <property type="match status" value="1"/>
</dbReference>
<dbReference type="NCBIfam" id="NF003966">
    <property type="entry name" value="PRK05458.1"/>
    <property type="match status" value="1"/>
</dbReference>
<dbReference type="PANTHER" id="PTHR43170">
    <property type="entry name" value="GMP REDUCTASE"/>
    <property type="match status" value="1"/>
</dbReference>
<dbReference type="PANTHER" id="PTHR43170:SF5">
    <property type="entry name" value="GMP REDUCTASE"/>
    <property type="match status" value="1"/>
</dbReference>
<dbReference type="Pfam" id="PF00478">
    <property type="entry name" value="IMPDH"/>
    <property type="match status" value="1"/>
</dbReference>
<dbReference type="PIRSF" id="PIRSF036500">
    <property type="entry name" value="GMP_red_Firmic"/>
    <property type="match status" value="1"/>
</dbReference>
<dbReference type="SMART" id="SM01240">
    <property type="entry name" value="IMPDH"/>
    <property type="match status" value="1"/>
</dbReference>
<dbReference type="SUPFAM" id="SSF51412">
    <property type="entry name" value="Inosine monophosphate dehydrogenase (IMPDH)"/>
    <property type="match status" value="1"/>
</dbReference>
<dbReference type="PROSITE" id="PS00487">
    <property type="entry name" value="IMP_DH_GMP_RED"/>
    <property type="match status" value="1"/>
</dbReference>
<sequence>MKIFDYEDIQLIPNKCIVESRSECDTTIQFGPKKFKLPVVPANMQTVMNEKLAKWFAENDYFYIMHRFDEEARIPFIKHMQNSGLFASISVGVKKAEFDFIEKLAQEKLIPEYITIDIAHGHSDSVINMIKHIKNHIPDSFVIAGNVGTPEGVRELENAGADATKVGIGPGRVCITKIKTGFGTGGWQLAALNICSKAARKPLIADGGIRTHGDIAKSIRFGASMVMIGSLFAAHEESPGETVELDGKQYKEYFGSASEFQKGEHKNVEGKKMFVEHKGSLMDTLKEMQQDLQSSISYAGGKDLKSLRTVDYVIVRNSIFNGDRD</sequence>